<proteinExistence type="inferred from homology"/>
<reference key="1">
    <citation type="journal article" date="2009" name="Infect. Immun.">
        <title>Comparative genomics reveal extensive transposon-mediated genomic plasticity and diversity among potential effector proteins within the genus Coxiella.</title>
        <authorList>
            <person name="Beare P.A."/>
            <person name="Unsworth N."/>
            <person name="Andoh M."/>
            <person name="Voth D.E."/>
            <person name="Omsland A."/>
            <person name="Gilk S.D."/>
            <person name="Williams K.P."/>
            <person name="Sobral B.W."/>
            <person name="Kupko J.J. III"/>
            <person name="Porcella S.F."/>
            <person name="Samuel J.E."/>
            <person name="Heinzen R.A."/>
        </authorList>
    </citation>
    <scope>NUCLEOTIDE SEQUENCE [LARGE SCALE GENOMIC DNA]</scope>
    <source>
        <strain>CbuK_Q154</strain>
    </source>
</reference>
<dbReference type="EC" id="3.2.2.27" evidence="1"/>
<dbReference type="EMBL" id="CP001020">
    <property type="protein sequence ID" value="ACJ20087.1"/>
    <property type="molecule type" value="Genomic_DNA"/>
</dbReference>
<dbReference type="RefSeq" id="WP_005768577.1">
    <property type="nucleotide sequence ID" value="NC_011528.1"/>
</dbReference>
<dbReference type="SMR" id="B6J738"/>
<dbReference type="KEGG" id="cbc:CbuK_0851"/>
<dbReference type="HOGENOM" id="CLU_032162_3_0_6"/>
<dbReference type="GO" id="GO:0005737">
    <property type="term" value="C:cytoplasm"/>
    <property type="evidence" value="ECO:0007669"/>
    <property type="project" value="UniProtKB-SubCell"/>
</dbReference>
<dbReference type="GO" id="GO:0004844">
    <property type="term" value="F:uracil DNA N-glycosylase activity"/>
    <property type="evidence" value="ECO:0007669"/>
    <property type="project" value="UniProtKB-UniRule"/>
</dbReference>
<dbReference type="GO" id="GO:0097510">
    <property type="term" value="P:base-excision repair, AP site formation via deaminated base removal"/>
    <property type="evidence" value="ECO:0007669"/>
    <property type="project" value="TreeGrafter"/>
</dbReference>
<dbReference type="CDD" id="cd10027">
    <property type="entry name" value="UDG-F1-like"/>
    <property type="match status" value="1"/>
</dbReference>
<dbReference type="FunFam" id="3.40.470.10:FF:000001">
    <property type="entry name" value="Uracil-DNA glycosylase"/>
    <property type="match status" value="1"/>
</dbReference>
<dbReference type="Gene3D" id="3.40.470.10">
    <property type="entry name" value="Uracil-DNA glycosylase-like domain"/>
    <property type="match status" value="1"/>
</dbReference>
<dbReference type="HAMAP" id="MF_00148">
    <property type="entry name" value="UDG"/>
    <property type="match status" value="1"/>
</dbReference>
<dbReference type="InterPro" id="IPR002043">
    <property type="entry name" value="UDG_fam1"/>
</dbReference>
<dbReference type="InterPro" id="IPR018085">
    <property type="entry name" value="Ura-DNA_Glyclase_AS"/>
</dbReference>
<dbReference type="InterPro" id="IPR005122">
    <property type="entry name" value="Uracil-DNA_glycosylase-like"/>
</dbReference>
<dbReference type="InterPro" id="IPR036895">
    <property type="entry name" value="Uracil-DNA_glycosylase-like_sf"/>
</dbReference>
<dbReference type="NCBIfam" id="NF003588">
    <property type="entry name" value="PRK05254.1-1"/>
    <property type="match status" value="1"/>
</dbReference>
<dbReference type="NCBIfam" id="NF003589">
    <property type="entry name" value="PRK05254.1-2"/>
    <property type="match status" value="1"/>
</dbReference>
<dbReference type="NCBIfam" id="NF003591">
    <property type="entry name" value="PRK05254.1-4"/>
    <property type="match status" value="1"/>
</dbReference>
<dbReference type="NCBIfam" id="NF003592">
    <property type="entry name" value="PRK05254.1-5"/>
    <property type="match status" value="1"/>
</dbReference>
<dbReference type="NCBIfam" id="TIGR00628">
    <property type="entry name" value="ung"/>
    <property type="match status" value="1"/>
</dbReference>
<dbReference type="PANTHER" id="PTHR11264">
    <property type="entry name" value="URACIL-DNA GLYCOSYLASE"/>
    <property type="match status" value="1"/>
</dbReference>
<dbReference type="PANTHER" id="PTHR11264:SF0">
    <property type="entry name" value="URACIL-DNA GLYCOSYLASE"/>
    <property type="match status" value="1"/>
</dbReference>
<dbReference type="Pfam" id="PF03167">
    <property type="entry name" value="UDG"/>
    <property type="match status" value="1"/>
</dbReference>
<dbReference type="SMART" id="SM00986">
    <property type="entry name" value="UDG"/>
    <property type="match status" value="1"/>
</dbReference>
<dbReference type="SMART" id="SM00987">
    <property type="entry name" value="UreE_C"/>
    <property type="match status" value="1"/>
</dbReference>
<dbReference type="SUPFAM" id="SSF52141">
    <property type="entry name" value="Uracil-DNA glycosylase-like"/>
    <property type="match status" value="1"/>
</dbReference>
<dbReference type="PROSITE" id="PS00130">
    <property type="entry name" value="U_DNA_GLYCOSYLASE"/>
    <property type="match status" value="1"/>
</dbReference>
<keyword id="KW-0963">Cytoplasm</keyword>
<keyword id="KW-0227">DNA damage</keyword>
<keyword id="KW-0234">DNA repair</keyword>
<keyword id="KW-0378">Hydrolase</keyword>
<comment type="function">
    <text evidence="1">Excises uracil residues from the DNA which can arise as a result of misincorporation of dUMP residues by DNA polymerase or due to deamination of cytosine.</text>
</comment>
<comment type="catalytic activity">
    <reaction evidence="1">
        <text>Hydrolyzes single-stranded DNA or mismatched double-stranded DNA and polynucleotides, releasing free uracil.</text>
        <dbReference type="EC" id="3.2.2.27"/>
    </reaction>
</comment>
<comment type="subcellular location">
    <subcellularLocation>
        <location evidence="1">Cytoplasm</location>
    </subcellularLocation>
</comment>
<comment type="similarity">
    <text evidence="1">Belongs to the uracil-DNA glycosylase (UDG) superfamily. UNG family.</text>
</comment>
<evidence type="ECO:0000255" key="1">
    <source>
        <dbReference type="HAMAP-Rule" id="MF_00148"/>
    </source>
</evidence>
<gene>
    <name evidence="1" type="primary">ung</name>
    <name type="ordered locus">CbuK_0851</name>
</gene>
<protein>
    <recommendedName>
        <fullName evidence="1">Uracil-DNA glycosylase</fullName>
        <shortName evidence="1">UDG</shortName>
        <ecNumber evidence="1">3.2.2.27</ecNumber>
    </recommendedName>
</protein>
<name>UNG_COXB1</name>
<feature type="chain" id="PRO_1000096574" description="Uracil-DNA glycosylase">
    <location>
        <begin position="1"/>
        <end position="229"/>
    </location>
</feature>
<feature type="active site" description="Proton acceptor" evidence="1">
    <location>
        <position position="67"/>
    </location>
</feature>
<sequence>MTTMAETQTWQTVLGEEKQEPYFQEILDFVKKERKAGKIIYPPQKDIFNALKLTPYEAVKVVILGQDPYHGPNQAHGLAFSVRPGVPAPPSLQNIFKELHADLGVSIPSHGFLEKWAKQGVLLLNAALTVEAGKPQSHANIGWHRFTDKVIESLNDHPEGIVFLLWGSYAQKKSQLITNLRHRILKAPHPSPLSAARGFLGCRHFSKANQLLHEMGRGEIDWALDEKVS</sequence>
<accession>B6J738</accession>
<organism>
    <name type="scientific">Coxiella burnetii (strain CbuK_Q154)</name>
    <name type="common">Coxiella burnetii (strain Q154)</name>
    <dbReference type="NCBI Taxonomy" id="434924"/>
    <lineage>
        <taxon>Bacteria</taxon>
        <taxon>Pseudomonadati</taxon>
        <taxon>Pseudomonadota</taxon>
        <taxon>Gammaproteobacteria</taxon>
        <taxon>Legionellales</taxon>
        <taxon>Coxiellaceae</taxon>
        <taxon>Coxiella</taxon>
    </lineage>
</organism>